<keyword id="KW-0963">Cytoplasm</keyword>
<keyword id="KW-0507">mRNA processing</keyword>
<keyword id="KW-1185">Reference proteome</keyword>
<gene>
    <name evidence="1" type="primary">NBDY</name>
</gene>
<reference key="1">
    <citation type="submission" date="2004-11" db="EMBL/GenBank/DDBJ databases">
        <authorList>
            <consortium name="The German cDNA consortium"/>
        </authorList>
    </citation>
    <scope>NUCLEOTIDE SEQUENCE [LARGE SCALE MRNA]</scope>
    <source>
        <tissue>Brain cortex</tissue>
    </source>
</reference>
<organism>
    <name type="scientific">Pongo abelii</name>
    <name type="common">Sumatran orangutan</name>
    <name type="synonym">Pongo pygmaeus abelii</name>
    <dbReference type="NCBI Taxonomy" id="9601"/>
    <lineage>
        <taxon>Eukaryota</taxon>
        <taxon>Metazoa</taxon>
        <taxon>Chordata</taxon>
        <taxon>Craniata</taxon>
        <taxon>Vertebrata</taxon>
        <taxon>Euteleostomi</taxon>
        <taxon>Mammalia</taxon>
        <taxon>Eutheria</taxon>
        <taxon>Euarchontoglires</taxon>
        <taxon>Primates</taxon>
        <taxon>Haplorrhini</taxon>
        <taxon>Catarrhini</taxon>
        <taxon>Hominidae</taxon>
        <taxon>Pongo</taxon>
    </lineage>
</organism>
<accession>Q5RDV1</accession>
<protein>
    <recommendedName>
        <fullName evidence="1">Negative regulator of P-body association</fullName>
    </recommendedName>
    <alternativeName>
        <fullName evidence="1">P-body dissociating protein</fullName>
    </alternativeName>
    <alternativeName>
        <fullName evidence="1">Protein NoBody</fullName>
    </alternativeName>
</protein>
<dbReference type="EMBL" id="CR857793">
    <property type="protein sequence ID" value="CAH90056.1"/>
    <property type="molecule type" value="mRNA"/>
</dbReference>
<dbReference type="FunCoup" id="Q5RDV1">
    <property type="interactions" value="19"/>
</dbReference>
<dbReference type="STRING" id="9601.ENSPPYP00000022836"/>
<dbReference type="Ensembl" id="ENSPPYT00000060833.1">
    <property type="protein sequence ID" value="ENSPPYP00000033482.1"/>
    <property type="gene ID" value="ENSPPYG00000031732.1"/>
</dbReference>
<dbReference type="GeneTree" id="ENSGT00390000004891"/>
<dbReference type="HOGENOM" id="CLU_2793310_0_0_1"/>
<dbReference type="InParanoid" id="Q5RDV1"/>
<dbReference type="OMA" id="DQPCVSG"/>
<dbReference type="TreeFam" id="TF353536"/>
<dbReference type="Proteomes" id="UP000001595">
    <property type="component" value="Chromosome X"/>
</dbReference>
<dbReference type="GO" id="GO:0000932">
    <property type="term" value="C:P-body"/>
    <property type="evidence" value="ECO:0000250"/>
    <property type="project" value="UniProtKB"/>
</dbReference>
<dbReference type="GO" id="GO:0006397">
    <property type="term" value="P:mRNA processing"/>
    <property type="evidence" value="ECO:0007669"/>
    <property type="project" value="UniProtKB-KW"/>
</dbReference>
<dbReference type="GO" id="GO:0010607">
    <property type="term" value="P:negative regulation of cytoplasmic mRNA processing body assembly"/>
    <property type="evidence" value="ECO:0000250"/>
    <property type="project" value="UniProtKB"/>
</dbReference>
<dbReference type="GO" id="GO:0000956">
    <property type="term" value="P:nuclear-transcribed mRNA catabolic process"/>
    <property type="evidence" value="ECO:0000250"/>
    <property type="project" value="UniProtKB"/>
</dbReference>
<dbReference type="CDD" id="cd20243">
    <property type="entry name" value="NoBody"/>
    <property type="match status" value="1"/>
</dbReference>
<dbReference type="InterPro" id="IPR047852">
    <property type="entry name" value="NoBody"/>
</dbReference>
<dbReference type="Pfam" id="PF21949">
    <property type="entry name" value="NoBody"/>
    <property type="match status" value="1"/>
</dbReference>
<name>NBDY_PONAB</name>
<feature type="chain" id="PRO_0000342660" description="Negative regulator of P-body association">
    <location>
        <begin position="1"/>
        <end position="68"/>
    </location>
</feature>
<feature type="region of interest" description="Disordered" evidence="2">
    <location>
        <begin position="1"/>
        <end position="68"/>
    </location>
</feature>
<feature type="site" description="Required for interaction with EDC4" evidence="1">
    <location>
        <position position="30"/>
    </location>
</feature>
<feature type="site" description="Required for interaction with EDC4" evidence="1">
    <location>
        <position position="34"/>
    </location>
</feature>
<comment type="function">
    <text evidence="1">Promotes dispersal of P-body components and is likely to play a role in the mRNA decapping process.</text>
</comment>
<comment type="subunit">
    <text evidence="1">Interacts with mRNA decapping proteins DCP1A, DCP2 and EDC4.</text>
</comment>
<comment type="subcellular location">
    <subcellularLocation>
        <location evidence="1">Cytoplasm</location>
        <location evidence="1">P-body</location>
    </subcellularLocation>
    <text evidence="1">Localizes to P-bodies at low concentrations without dissociating them.</text>
</comment>
<proteinExistence type="inferred from homology"/>
<evidence type="ECO:0000250" key="1">
    <source>
        <dbReference type="UniProtKB" id="A0A0U1RR68"/>
    </source>
</evidence>
<evidence type="ECO:0000256" key="2">
    <source>
        <dbReference type="SAM" id="MobiDB-lite"/>
    </source>
</evidence>
<sequence length="68" mass="7025">MGDQPCASGRSTLPPGNAREAKPPKKRCLLAPRWDYPEGTPNGGSTTLPSAPPPASAGLKSHPPPPEK</sequence>